<dbReference type="EMBL" id="M17102">
    <property type="protein sequence ID" value="AAA24723.1"/>
    <property type="molecule type" value="Genomic_DNA"/>
</dbReference>
<dbReference type="EMBL" id="M89479">
    <property type="protein sequence ID" value="AAA24727.1"/>
    <property type="molecule type" value="Genomic_DNA"/>
</dbReference>
<dbReference type="EMBL" id="L10328">
    <property type="protein sequence ID" value="AAA62018.1"/>
    <property type="molecule type" value="Genomic_DNA"/>
</dbReference>
<dbReference type="EMBL" id="U00096">
    <property type="protein sequence ID" value="AAC76689.1"/>
    <property type="molecule type" value="Genomic_DNA"/>
</dbReference>
<dbReference type="EMBL" id="AP009048">
    <property type="protein sequence ID" value="BAE77627.1"/>
    <property type="molecule type" value="Genomic_DNA"/>
</dbReference>
<dbReference type="PIR" id="A30395">
    <property type="entry name" value="MMECHP"/>
</dbReference>
<dbReference type="RefSeq" id="NP_418122.1">
    <property type="nucleotide sequence ID" value="NC_000913.3"/>
</dbReference>
<dbReference type="RefSeq" id="WP_000879194.1">
    <property type="nucleotide sequence ID" value="NZ_STEB01000015.1"/>
</dbReference>
<dbReference type="SMR" id="P0AGC0"/>
<dbReference type="BioGRID" id="4262581">
    <property type="interactions" value="5"/>
</dbReference>
<dbReference type="FunCoup" id="P0AGC0">
    <property type="interactions" value="275"/>
</dbReference>
<dbReference type="STRING" id="511145.b3666"/>
<dbReference type="TCDB" id="2.A.1.4.1">
    <property type="family name" value="the major facilitator superfamily (mfs)"/>
</dbReference>
<dbReference type="PaxDb" id="511145-b3666"/>
<dbReference type="EnsemblBacteria" id="AAC76689">
    <property type="protein sequence ID" value="AAC76689"/>
    <property type="gene ID" value="b3666"/>
</dbReference>
<dbReference type="GeneID" id="93778407"/>
<dbReference type="GeneID" id="948201"/>
<dbReference type="KEGG" id="ecj:JW3641"/>
<dbReference type="KEGG" id="eco:b3666"/>
<dbReference type="KEGG" id="ecoc:C3026_19870"/>
<dbReference type="PATRIC" id="fig|1411691.4.peg.3039"/>
<dbReference type="EchoBASE" id="EB1047"/>
<dbReference type="eggNOG" id="COG2271">
    <property type="taxonomic scope" value="Bacteria"/>
</dbReference>
<dbReference type="HOGENOM" id="CLU_001265_31_0_6"/>
<dbReference type="InParanoid" id="P0AGC0"/>
<dbReference type="OMA" id="GTLMWGY"/>
<dbReference type="OrthoDB" id="9766638at2"/>
<dbReference type="PhylomeDB" id="P0AGC0"/>
<dbReference type="BioCyc" id="EcoCyc:UHPT-MONOMER"/>
<dbReference type="BioCyc" id="MetaCyc:UHPT-MONOMER"/>
<dbReference type="PRO" id="PR:P0AGC0"/>
<dbReference type="Proteomes" id="UP000000625">
    <property type="component" value="Chromosome"/>
</dbReference>
<dbReference type="GO" id="GO:0005886">
    <property type="term" value="C:plasma membrane"/>
    <property type="evidence" value="ECO:0000314"/>
    <property type="project" value="EcoCyc"/>
</dbReference>
<dbReference type="GO" id="GO:0061513">
    <property type="term" value="F:glucose 6-phosphate:phosphate antiporter activity"/>
    <property type="evidence" value="ECO:0000318"/>
    <property type="project" value="GO_Central"/>
</dbReference>
<dbReference type="GO" id="GO:0015526">
    <property type="term" value="F:hexose-phosphate:phosphate antiporter activity"/>
    <property type="evidence" value="ECO:0000314"/>
    <property type="project" value="EcoCyc"/>
</dbReference>
<dbReference type="GO" id="GO:0015760">
    <property type="term" value="P:glucose-6-phosphate transport"/>
    <property type="evidence" value="ECO:0000314"/>
    <property type="project" value="EcoCyc"/>
</dbReference>
<dbReference type="GO" id="GO:0015712">
    <property type="term" value="P:hexose phosphate transport"/>
    <property type="evidence" value="ECO:0000315"/>
    <property type="project" value="EcoCyc"/>
</dbReference>
<dbReference type="GO" id="GO:0035435">
    <property type="term" value="P:phosphate ion transmembrane transport"/>
    <property type="evidence" value="ECO:0000318"/>
    <property type="project" value="GO_Central"/>
</dbReference>
<dbReference type="CDD" id="cd17345">
    <property type="entry name" value="MFS_GlpT"/>
    <property type="match status" value="1"/>
</dbReference>
<dbReference type="FunFam" id="1.20.1250.20:FF:000031">
    <property type="entry name" value="Hexose phosphate transporter"/>
    <property type="match status" value="1"/>
</dbReference>
<dbReference type="FunFam" id="1.20.1250.20:FF:000033">
    <property type="entry name" value="Hexose phosphate transporter"/>
    <property type="match status" value="1"/>
</dbReference>
<dbReference type="Gene3D" id="1.20.1250.20">
    <property type="entry name" value="MFS general substrate transporter like domains"/>
    <property type="match status" value="2"/>
</dbReference>
<dbReference type="InterPro" id="IPR011701">
    <property type="entry name" value="MFS"/>
</dbReference>
<dbReference type="InterPro" id="IPR020846">
    <property type="entry name" value="MFS_dom"/>
</dbReference>
<dbReference type="InterPro" id="IPR036259">
    <property type="entry name" value="MFS_trans_sf"/>
</dbReference>
<dbReference type="InterPro" id="IPR051337">
    <property type="entry name" value="OPA_Antiporter"/>
</dbReference>
<dbReference type="InterPro" id="IPR021159">
    <property type="entry name" value="Sugar-P_transporter_CS"/>
</dbReference>
<dbReference type="InterPro" id="IPR000849">
    <property type="entry name" value="Sugar_P_transporter"/>
</dbReference>
<dbReference type="NCBIfam" id="TIGR00881">
    <property type="entry name" value="2A0104"/>
    <property type="match status" value="1"/>
</dbReference>
<dbReference type="NCBIfam" id="NF007107">
    <property type="entry name" value="PRK09556.1"/>
    <property type="match status" value="1"/>
</dbReference>
<dbReference type="PANTHER" id="PTHR43826">
    <property type="entry name" value="GLUCOSE-6-PHOSPHATE EXCHANGER SLC37A4"/>
    <property type="match status" value="1"/>
</dbReference>
<dbReference type="PANTHER" id="PTHR43826:SF2">
    <property type="entry name" value="HEXOSE-6-PHOSPHATE:PHOSPHATE ANTIPORTER"/>
    <property type="match status" value="1"/>
</dbReference>
<dbReference type="Pfam" id="PF07690">
    <property type="entry name" value="MFS_1"/>
    <property type="match status" value="1"/>
</dbReference>
<dbReference type="PIRSF" id="PIRSF002808">
    <property type="entry name" value="Hexose_phosphate_transp"/>
    <property type="match status" value="1"/>
</dbReference>
<dbReference type="SUPFAM" id="SSF103473">
    <property type="entry name" value="MFS general substrate transporter"/>
    <property type="match status" value="1"/>
</dbReference>
<dbReference type="PROSITE" id="PS00942">
    <property type="entry name" value="GLPT"/>
    <property type="match status" value="1"/>
</dbReference>
<dbReference type="PROSITE" id="PS50850">
    <property type="entry name" value="MFS"/>
    <property type="match status" value="1"/>
</dbReference>
<comment type="function">
    <text evidence="5 6 7 8 10 11">Mediates the exchange of external hexose 6-phosphate and internal inorganic phosphate. Can transport glucose-6-phosphate, fructose-6-phosphate and mannose-6-phosphate. Also catalyzes the neutral exchange of internal and external phosphate.</text>
</comment>
<comment type="activity regulation">
    <text evidence="7">Reaction is unaffected by the ionophores valinomycin, valinomycin plus nigericin, and carbonyl cyanide p-trifluoromethoxyphenylhydrazone (FCCP).</text>
</comment>
<comment type="subunit">
    <text evidence="5">Monomer.</text>
</comment>
<comment type="subcellular location">
    <subcellularLocation>
        <location evidence="3 4 11">Cell inner membrane</location>
        <topology evidence="1 4">Multi-pass membrane protein</topology>
    </subcellularLocation>
</comment>
<comment type="induction">
    <text evidence="2 6 9 12">Expression is induced by external glucose-6-phosphate through the UhpABC signaling cascade.</text>
</comment>
<comment type="similarity">
    <text evidence="13">Belongs to the major facilitator superfamily. Organophosphate:Pi antiporter (OPA) (TC 2.A.1.4) family.</text>
</comment>
<sequence length="463" mass="50607">MLAFLNQVRKPTLDLPLEVRRKMWFKPFMQSYLVVFIGYLTMYLIRKNFNIAQNDMISTYGLSMTQLGMIGLGFSITYGVGKTLVSYYADGKNTKQFLPFMLILSAICMLGFSASMGSGSVSLFLMIAFYALSGFFQSTGGSCSYSTITKWTPRRKRGTFLGFWNISHNLGGAGAAGVALFGANYLFDGHVIGMFIFPSIIALIVGFIGLRYGSDSPESYGLGKAEELFGEEISEEDKETESTDMTKWQIFVEYVLKNKVIWLLCFANIFLYVVRIGIDQWSTVYAFQELKLSKAVAIQGFTLFEAGALVGTLLWGWLSDLANGRRGLVACIALALIIATLGVYQHASNEYIYLASLFALGFLVFGPQLLIGVAAVGFVPKKAIGAADGIKGTFAYLIGDSFAKLGLGMIADGTPVFGLTGWAGTFAALDIAAIGCICLMAIVAVMEERKIRREKKIQQLTVA</sequence>
<accession>P0AGC0</accession>
<accession>P13408</accession>
<accession>P76727</accession>
<accession>Q2M7X9</accession>
<reference key="1">
    <citation type="journal article" date="1987" name="J. Bacteriol.">
        <title>Nucleotide sequence of the uhp region of Escherichia coli.</title>
        <authorList>
            <person name="Friedrich M.J."/>
            <person name="Kadner R.J."/>
        </authorList>
    </citation>
    <scope>NUCLEOTIDE SEQUENCE [GENOMIC DNA]</scope>
</reference>
<reference key="2">
    <citation type="journal article" date="1992" name="J. Bacteriol.">
        <title>Structure and function of the uhp genes for the sugar phosphate transport system in Escherichia coli and Salmonella typhimurium.</title>
        <authorList>
            <person name="Island M.D."/>
            <person name="Wei B.-Y."/>
            <person name="Kadner R.J."/>
        </authorList>
    </citation>
    <scope>NUCLEOTIDE SEQUENCE [GENOMIC DNA]</scope>
</reference>
<reference key="3">
    <citation type="journal article" date="1993" name="Genomics">
        <title>DNA sequence and analysis of 136 kilobases of the Escherichia coli genome: organizational symmetry around the origin of replication.</title>
        <authorList>
            <person name="Burland V.D."/>
            <person name="Plunkett G. III"/>
            <person name="Daniels D.L."/>
            <person name="Blattner F.R."/>
        </authorList>
    </citation>
    <scope>NUCLEOTIDE SEQUENCE [LARGE SCALE GENOMIC DNA]</scope>
    <source>
        <strain>K12 / MG1655 / ATCC 47076</strain>
    </source>
</reference>
<reference key="4">
    <citation type="journal article" date="1997" name="Science">
        <title>The complete genome sequence of Escherichia coli K-12.</title>
        <authorList>
            <person name="Blattner F.R."/>
            <person name="Plunkett G. III"/>
            <person name="Bloch C.A."/>
            <person name="Perna N.T."/>
            <person name="Burland V."/>
            <person name="Riley M."/>
            <person name="Collado-Vides J."/>
            <person name="Glasner J.D."/>
            <person name="Rode C.K."/>
            <person name="Mayhew G.F."/>
            <person name="Gregor J."/>
            <person name="Davis N.W."/>
            <person name="Kirkpatrick H.A."/>
            <person name="Goeden M.A."/>
            <person name="Rose D.J."/>
            <person name="Mau B."/>
            <person name="Shao Y."/>
        </authorList>
    </citation>
    <scope>NUCLEOTIDE SEQUENCE [LARGE SCALE GENOMIC DNA]</scope>
    <source>
        <strain>K12 / MG1655 / ATCC 47076</strain>
    </source>
</reference>
<reference key="5">
    <citation type="journal article" date="2006" name="Mol. Syst. Biol.">
        <title>Highly accurate genome sequences of Escherichia coli K-12 strains MG1655 and W3110.</title>
        <authorList>
            <person name="Hayashi K."/>
            <person name="Morooka N."/>
            <person name="Yamamoto Y."/>
            <person name="Fujita K."/>
            <person name="Isono K."/>
            <person name="Choi S."/>
            <person name="Ohtsubo E."/>
            <person name="Baba T."/>
            <person name="Wanner B.L."/>
            <person name="Mori H."/>
            <person name="Horiuchi T."/>
        </authorList>
    </citation>
    <scope>NUCLEOTIDE SEQUENCE [LARGE SCALE GENOMIC DNA]</scope>
    <source>
        <strain>K12 / W3110 / ATCC 27325 / DSM 5911</strain>
    </source>
</reference>
<reference key="6">
    <citation type="journal article" date="1966" name="Biochim. Biophys. Acta">
        <title>A hexose-phosphate transport system in Escherichia coli.</title>
        <authorList>
            <person name="Winkler H.H."/>
        </authorList>
    </citation>
    <scope>FUNCTION</scope>
</reference>
<reference key="7">
    <citation type="journal article" date="1970" name="J. Bacteriol.">
        <title>Compartmentation in the induction of the hexose-6-phosphate transport system of Escherichia coli.</title>
        <authorList>
            <person name="Winkler H.H."/>
        </authorList>
    </citation>
    <scope>INDUCTION</scope>
</reference>
<reference key="8">
    <citation type="journal article" date="1986" name="J. Biol. Chem.">
        <title>Reconstitution of sugar phosphate transport systems of Escherichia coli.</title>
        <authorList>
            <person name="Ambudkar S.V."/>
            <person name="Larson T.J."/>
            <person name="Maloney P.C."/>
        </authorList>
    </citation>
    <scope>FUNCTION</scope>
    <source>
        <strain>K12</strain>
    </source>
</reference>
<reference key="9">
    <citation type="journal article" date="1987" name="J. Bacteriol.">
        <title>Identification of uhp polypeptides and evidence for their role in exogenous induction of the sugar phosphate transport system of Escherichia coli K-12.</title>
        <authorList>
            <person name="Weston L.A."/>
            <person name="Kadner R.J."/>
        </authorList>
    </citation>
    <scope>FUNCTION</scope>
    <scope>INDUCTION</scope>
</reference>
<reference key="10">
    <citation type="journal article" date="1988" name="J. Biol. Chem.">
        <title>The mechanism of glucose 6-phosphate transport by Escherichia coli.</title>
        <authorList>
            <person name="Sonna L.A."/>
            <person name="Ambudkar S.V."/>
            <person name="Maloney P.C."/>
        </authorList>
    </citation>
    <scope>FUNCTION AS A HEXOSE-6-PHOSPHATE:PHOSPHATE ANTIPORTER</scope>
    <scope>ACTIVITY REGULATION</scope>
</reference>
<reference key="11">
    <citation type="journal article" date="1990" name="J. Bacteriol.">
        <title>Topology of the Escherichia coli uhpT sugar-phosphate transporter analyzed by using TnphoA fusions.</title>
        <authorList>
            <person name="Lloyd A.D."/>
            <person name="Kadner R.J."/>
        </authorList>
    </citation>
    <scope>TOPOLOGY</scope>
    <scope>SUBCELLULAR LOCATION</scope>
    <source>
        <strain>K12</strain>
    </source>
</reference>
<reference key="12">
    <citation type="journal article" date="1990" name="J. Biol. Chem.">
        <title>UhpT, the sugar phosphate antiporter of Escherichia coli, functions as a monomer.</title>
        <authorList>
            <person name="Ambudkar S.V."/>
            <person name="Anantharam V."/>
            <person name="Maloney P.C."/>
        </authorList>
    </citation>
    <scope>FUNCTION</scope>
    <scope>SUBUNIT</scope>
    <source>
        <strain>K12</strain>
    </source>
</reference>
<reference key="13">
    <citation type="journal article" date="1993" name="Cell">
        <title>Identification of a residue in the translocation pathway of a membrane carrier.</title>
        <authorList>
            <person name="Yan R.T."/>
            <person name="Maloney P.C."/>
        </authorList>
    </citation>
    <scope>FUNCTION</scope>
    <scope>SUBCELLULAR LOCATION</scope>
    <scope>TOPOLOGY</scope>
    <scope>MUTAGENESIS OF CYS-108; CYS-143; CYS-265; CYS-331; CYS-436 AND CYS-438</scope>
</reference>
<reference key="14">
    <citation type="journal article" date="1997" name="J. Biol. Chem.">
        <title>Protein phosphorylation affects binding of the Escherichia coli transcription activator UhpA to the uhpT promoter.</title>
        <authorList>
            <person name="Dahl J.L."/>
            <person name="Wei B.Y."/>
            <person name="Kadner R.J."/>
        </authorList>
    </citation>
    <scope>INDUCTION</scope>
</reference>
<reference key="15">
    <citation type="journal article" date="2001" name="Microbiology">
        <title>Glucose-6-phosphate-dependent phosphoryl flow through the Uhp two-component regulatory system.</title>
        <authorList>
            <person name="Verhamme D.T."/>
            <person name="Arents J.C."/>
            <person name="Postma P.W."/>
            <person name="Crielaard W."/>
            <person name="Hellingwerf K.J."/>
        </authorList>
    </citation>
    <scope>INDUCTION</scope>
</reference>
<reference key="16">
    <citation type="journal article" date="2005" name="Science">
        <title>Global topology analysis of the Escherichia coli inner membrane proteome.</title>
        <authorList>
            <person name="Daley D.O."/>
            <person name="Rapp M."/>
            <person name="Granseth E."/>
            <person name="Melen K."/>
            <person name="Drew D."/>
            <person name="von Heijne G."/>
        </authorList>
    </citation>
    <scope>TOPOLOGY [LARGE SCALE ANALYSIS]</scope>
    <scope>SUBCELLULAR LOCATION</scope>
    <source>
        <strain>K12 / MG1655 / ATCC 47076</strain>
    </source>
</reference>
<evidence type="ECO:0000255" key="1"/>
<evidence type="ECO:0000269" key="2">
    <source>
    </source>
</evidence>
<evidence type="ECO:0000269" key="3">
    <source>
    </source>
</evidence>
<evidence type="ECO:0000269" key="4">
    <source>
    </source>
</evidence>
<evidence type="ECO:0000269" key="5">
    <source>
    </source>
</evidence>
<evidence type="ECO:0000269" key="6">
    <source>
    </source>
</evidence>
<evidence type="ECO:0000269" key="7">
    <source>
    </source>
</evidence>
<evidence type="ECO:0000269" key="8">
    <source>
    </source>
</evidence>
<evidence type="ECO:0000269" key="9">
    <source>
    </source>
</evidence>
<evidence type="ECO:0000269" key="10">
    <source>
    </source>
</evidence>
<evidence type="ECO:0000269" key="11">
    <source>
    </source>
</evidence>
<evidence type="ECO:0000269" key="12">
    <source>
    </source>
</evidence>
<evidence type="ECO:0000305" key="13"/>
<evidence type="ECO:0000305" key="14">
    <source>
    </source>
</evidence>
<evidence type="ECO:0000305" key="15">
    <source>
    </source>
</evidence>
<organism>
    <name type="scientific">Escherichia coli (strain K12)</name>
    <dbReference type="NCBI Taxonomy" id="83333"/>
    <lineage>
        <taxon>Bacteria</taxon>
        <taxon>Pseudomonadati</taxon>
        <taxon>Pseudomonadota</taxon>
        <taxon>Gammaproteobacteria</taxon>
        <taxon>Enterobacterales</taxon>
        <taxon>Enterobacteriaceae</taxon>
        <taxon>Escherichia</taxon>
    </lineage>
</organism>
<proteinExistence type="evidence at protein level"/>
<feature type="chain" id="PRO_0000199883" description="Hexose-6-phosphate:phosphate antiporter">
    <location>
        <begin position="1"/>
        <end position="463"/>
    </location>
</feature>
<feature type="topological domain" description="Cytoplasmic" evidence="14">
    <location>
        <begin position="1"/>
        <end position="24"/>
    </location>
</feature>
<feature type="transmembrane region" description="Helical" evidence="1">
    <location>
        <begin position="25"/>
        <end position="45"/>
    </location>
</feature>
<feature type="topological domain" description="Periplasmic" evidence="14">
    <location>
        <begin position="46"/>
        <end position="60"/>
    </location>
</feature>
<feature type="transmembrane region" description="Helical" evidence="1">
    <location>
        <begin position="61"/>
        <end position="81"/>
    </location>
</feature>
<feature type="topological domain" description="Cytoplasmic" evidence="14">
    <location>
        <begin position="82"/>
        <end position="96"/>
    </location>
</feature>
<feature type="transmembrane region" description="Helical" evidence="1">
    <location>
        <begin position="97"/>
        <end position="117"/>
    </location>
</feature>
<feature type="topological domain" description="Periplasmic" evidence="14">
    <location>
        <begin position="118"/>
        <end position="120"/>
    </location>
</feature>
<feature type="transmembrane region" description="Helical" evidence="1">
    <location>
        <begin position="121"/>
        <end position="141"/>
    </location>
</feature>
<feature type="topological domain" description="Cytoplasmic" evidence="14 15">
    <location>
        <begin position="142"/>
        <end position="159"/>
    </location>
</feature>
<feature type="transmembrane region" description="Helical" evidence="1">
    <location>
        <begin position="160"/>
        <end position="180"/>
    </location>
</feature>
<feature type="topological domain" description="Periplasmic" evidence="14">
    <location>
        <begin position="181"/>
        <end position="189"/>
    </location>
</feature>
<feature type="transmembrane region" description="Helical" evidence="1">
    <location>
        <begin position="190"/>
        <end position="210"/>
    </location>
</feature>
<feature type="topological domain" description="Cytoplasmic" evidence="14">
    <location>
        <begin position="211"/>
        <end position="259"/>
    </location>
</feature>
<feature type="transmembrane region" description="Helical" evidence="1">
    <location>
        <begin position="260"/>
        <end position="280"/>
    </location>
</feature>
<feature type="topological domain" description="Periplasmic" evidence="4">
    <location>
        <begin position="281"/>
        <end position="297"/>
    </location>
</feature>
<feature type="transmembrane region" description="Helical" evidence="1">
    <location>
        <begin position="298"/>
        <end position="318"/>
    </location>
</feature>
<feature type="topological domain" description="Cytoplasmic" evidence="14">
    <location>
        <begin position="319"/>
        <end position="326"/>
    </location>
</feature>
<feature type="transmembrane region" description="Helical" evidence="1">
    <location>
        <begin position="327"/>
        <end position="347"/>
    </location>
</feature>
<feature type="topological domain" description="Periplasmic" evidence="4">
    <location>
        <begin position="348"/>
        <end position="357"/>
    </location>
</feature>
<feature type="transmembrane region" description="Helical" evidence="1">
    <location>
        <begin position="358"/>
        <end position="378"/>
    </location>
</feature>
<feature type="topological domain" description="Cytoplasmic" evidence="14">
    <location>
        <begin position="379"/>
        <end position="391"/>
    </location>
</feature>
<feature type="transmembrane region" description="Helical" evidence="1">
    <location>
        <begin position="392"/>
        <end position="411"/>
    </location>
</feature>
<feature type="topological domain" description="Periplasmic" evidence="14">
    <location>
        <begin position="412"/>
        <end position="425"/>
    </location>
</feature>
<feature type="transmembrane region" description="Helical" evidence="1">
    <location>
        <begin position="426"/>
        <end position="446"/>
    </location>
</feature>
<feature type="topological domain" description="Cytoplasmic" evidence="3 14">
    <location>
        <begin position="447"/>
        <end position="463"/>
    </location>
</feature>
<feature type="mutagenesis site" description="No change in activity." evidence="11">
    <original>C</original>
    <variation>S</variation>
    <location>
        <position position="108"/>
    </location>
</feature>
<feature type="mutagenesis site" description="30% of wild-type sugar phosphate transport activity." evidence="11">
    <original>C</original>
    <variation>S</variation>
    <location>
        <position position="143"/>
    </location>
</feature>
<feature type="mutagenesis site" description="No change in activity." evidence="11">
    <original>C</original>
    <variation>S</variation>
    <location>
        <position position="265"/>
    </location>
</feature>
<feature type="mutagenesis site" description="No change in activity." evidence="11">
    <original>C</original>
    <variation>S</variation>
    <location>
        <position position="331"/>
    </location>
</feature>
<feature type="mutagenesis site" description="No change in activity." evidence="11">
    <original>C</original>
    <variation>S</variation>
    <location>
        <position position="436"/>
    </location>
</feature>
<feature type="mutagenesis site" description="No change in activity." evidence="11">
    <original>C</original>
    <variation>S</variation>
    <location>
        <position position="438"/>
    </location>
</feature>
<keyword id="KW-0997">Cell inner membrane</keyword>
<keyword id="KW-1003">Cell membrane</keyword>
<keyword id="KW-0472">Membrane</keyword>
<keyword id="KW-0592">Phosphate transport</keyword>
<keyword id="KW-1185">Reference proteome</keyword>
<keyword id="KW-0762">Sugar transport</keyword>
<keyword id="KW-0812">Transmembrane</keyword>
<keyword id="KW-1133">Transmembrane helix</keyword>
<keyword id="KW-0813">Transport</keyword>
<gene>
    <name type="primary">uhpT</name>
    <name type="ordered locus">b3666</name>
    <name type="ordered locus">JW3641</name>
</gene>
<protein>
    <recommendedName>
        <fullName evidence="13">Hexose-6-phosphate:phosphate antiporter</fullName>
    </recommendedName>
</protein>
<name>UHPT_ECOLI</name>